<evidence type="ECO:0000250" key="1"/>
<evidence type="ECO:0000255" key="2"/>
<evidence type="ECO:0000305" key="3"/>
<comment type="function">
    <text evidence="1">Probable component of the endoplasmic reticulum-associated degradation (ERAD) pathway.</text>
</comment>
<comment type="similarity">
    <text evidence="3">Belongs to the LCL2 family.</text>
</comment>
<feature type="signal peptide" evidence="2">
    <location>
        <begin position="1"/>
        <end position="21"/>
    </location>
</feature>
<feature type="chain" id="PRO_5000410280" description="Long chronological lifespan protein 2">
    <location>
        <begin position="22"/>
        <end position="122"/>
    </location>
</feature>
<gene>
    <name type="primary">lcl2</name>
    <name type="ORF">Pc22g14060</name>
</gene>
<organism>
    <name type="scientific">Penicillium rubens (strain ATCC 28089 / DSM 1075 / NRRL 1951 / Wisconsin 54-1255)</name>
    <name type="common">Penicillium chrysogenum</name>
    <dbReference type="NCBI Taxonomy" id="500485"/>
    <lineage>
        <taxon>Eukaryota</taxon>
        <taxon>Fungi</taxon>
        <taxon>Dikarya</taxon>
        <taxon>Ascomycota</taxon>
        <taxon>Pezizomycotina</taxon>
        <taxon>Eurotiomycetes</taxon>
        <taxon>Eurotiomycetidae</taxon>
        <taxon>Eurotiales</taxon>
        <taxon>Aspergillaceae</taxon>
        <taxon>Penicillium</taxon>
        <taxon>Penicillium chrysogenum species complex</taxon>
    </lineage>
</organism>
<protein>
    <recommendedName>
        <fullName>Long chronological lifespan protein 2</fullName>
    </recommendedName>
</protein>
<proteinExistence type="inferred from homology"/>
<accession>B6HU36</accession>
<name>LCL2_PENRW</name>
<keyword id="KW-1185">Reference proteome</keyword>
<keyword id="KW-0732">Signal</keyword>
<reference key="1">
    <citation type="journal article" date="2008" name="Nat. Biotechnol.">
        <title>Genome sequencing and analysis of the filamentous fungus Penicillium chrysogenum.</title>
        <authorList>
            <person name="van den Berg M.A."/>
            <person name="Albang R."/>
            <person name="Albermann K."/>
            <person name="Badger J.H."/>
            <person name="Daran J.-M."/>
            <person name="Driessen A.J.M."/>
            <person name="Garcia-Estrada C."/>
            <person name="Fedorova N.D."/>
            <person name="Harris D.M."/>
            <person name="Heijne W.H.M."/>
            <person name="Joardar V.S."/>
            <person name="Kiel J.A.K.W."/>
            <person name="Kovalchuk A."/>
            <person name="Martin J.F."/>
            <person name="Nierman W.C."/>
            <person name="Nijland J.G."/>
            <person name="Pronk J.T."/>
            <person name="Roubos J.A."/>
            <person name="van der Klei I.J."/>
            <person name="van Peij N.N.M.E."/>
            <person name="Veenhuis M."/>
            <person name="von Doehren H."/>
            <person name="Wagner C."/>
            <person name="Wortman J.R."/>
            <person name="Bovenberg R.A.L."/>
        </authorList>
    </citation>
    <scope>NUCLEOTIDE SEQUENCE [LARGE SCALE GENOMIC DNA]</scope>
    <source>
        <strain>ATCC 28089 / DSM 1075 / NRRL 1951 / Wisconsin 54-1255</strain>
    </source>
</reference>
<dbReference type="EMBL" id="AM920437">
    <property type="protein sequence ID" value="CAP98694.1"/>
    <property type="molecule type" value="Genomic_DNA"/>
</dbReference>
<dbReference type="RefSeq" id="XP_002565330.1">
    <property type="nucleotide sequence ID" value="XM_002565284.1"/>
</dbReference>
<dbReference type="STRING" id="500485.B6HU36"/>
<dbReference type="GeneID" id="8311317"/>
<dbReference type="KEGG" id="pcs:N7525_004963"/>
<dbReference type="VEuPathDB" id="FungiDB:PCH_Pc22g14060"/>
<dbReference type="eggNOG" id="ENOG502S416">
    <property type="taxonomic scope" value="Eukaryota"/>
</dbReference>
<dbReference type="HOGENOM" id="CLU_142363_0_0_1"/>
<dbReference type="OMA" id="DNYLCPD"/>
<dbReference type="OrthoDB" id="2234316at2759"/>
<dbReference type="BioCyc" id="PCHR:PC22G14060-MONOMER"/>
<dbReference type="Proteomes" id="UP000000724">
    <property type="component" value="Contig Pc00c22"/>
</dbReference>
<dbReference type="GO" id="GO:0036503">
    <property type="term" value="P:ERAD pathway"/>
    <property type="evidence" value="ECO:0007669"/>
    <property type="project" value="TreeGrafter"/>
</dbReference>
<dbReference type="CDD" id="cd23996">
    <property type="entry name" value="LCL2-like"/>
    <property type="match status" value="1"/>
</dbReference>
<dbReference type="InterPro" id="IPR034543">
    <property type="entry name" value="LCL2"/>
</dbReference>
<dbReference type="PANTHER" id="PTHR38425">
    <property type="entry name" value="LONG CHRONOLOGICAL LIFESPAN PROTEIN 2"/>
    <property type="match status" value="1"/>
</dbReference>
<dbReference type="PANTHER" id="PTHR38425:SF1">
    <property type="entry name" value="LONG CHRONOLOGICAL LIFESPAN PROTEIN 2"/>
    <property type="match status" value="1"/>
</dbReference>
<sequence>MLQSWRQALWALLLLVSVAQAQFNFFDQMFGGGEQQRQQQRSQNSPSDSDRYQQMWNGAQCDHYLCPGTLACVHFPHHCPCPHPDVEEKVELGEGSAVCVSKGGFKAGEAARKIELARKGLL</sequence>